<protein>
    <recommendedName>
        <fullName>Autophagy-related protein 27</fullName>
    </recommendedName>
</protein>
<name>ATG27_CANGA</name>
<proteinExistence type="inferred from homology"/>
<evidence type="ECO:0000250" key="1"/>
<evidence type="ECO:0000255" key="2"/>
<evidence type="ECO:0000255" key="3">
    <source>
        <dbReference type="PROSITE-ProRule" id="PRU01262"/>
    </source>
</evidence>
<evidence type="ECO:0000256" key="4">
    <source>
        <dbReference type="SAM" id="MobiDB-lite"/>
    </source>
</evidence>
<evidence type="ECO:0000305" key="5"/>
<comment type="function">
    <text evidence="1">Effector of VPS34 phosphatidylinositol 3-phosphate kinase signaling. Regulates the cytoplasm to vacuole transport (Cvt) vesicle formation. Plays a role in ATG protein retrieval from the pre-autophagosomal structure (PAS) and is especially required for autophagy-dependent cycling of ATG9 (By similarity).</text>
</comment>
<comment type="subcellular location">
    <subcellularLocation>
        <location evidence="1">Cytoplasmic vesicle membrane</location>
        <topology evidence="1">Single-pass type I membrane protein</topology>
    </subcellularLocation>
    <subcellularLocation>
        <location evidence="1">Golgi apparatus membrane</location>
        <topology evidence="1">Single-pass type I membrane protein</topology>
    </subcellularLocation>
    <subcellularLocation>
        <location evidence="1">Mitochondrion membrane</location>
        <topology evidence="1">Single-pass membrane protein</topology>
    </subcellularLocation>
    <subcellularLocation>
        <location evidence="1">Preautophagosomal structure membrane</location>
        <topology evidence="1">Single-pass type I membrane protein</topology>
    </subcellularLocation>
    <text evidence="1">Cycles among the pre-autophagosomal structure (PAS), mitochondria and Golgi.</text>
</comment>
<comment type="similarity">
    <text evidence="5">Belongs to the ATG27 family.</text>
</comment>
<keyword id="KW-0072">Autophagy</keyword>
<keyword id="KW-0968">Cytoplasmic vesicle</keyword>
<keyword id="KW-1015">Disulfide bond</keyword>
<keyword id="KW-0325">Glycoprotein</keyword>
<keyword id="KW-0333">Golgi apparatus</keyword>
<keyword id="KW-0472">Membrane</keyword>
<keyword id="KW-0496">Mitochondrion</keyword>
<keyword id="KW-0653">Protein transport</keyword>
<keyword id="KW-1185">Reference proteome</keyword>
<keyword id="KW-0732">Signal</keyword>
<keyword id="KW-0812">Transmembrane</keyword>
<keyword id="KW-1133">Transmembrane helix</keyword>
<keyword id="KW-0813">Transport</keyword>
<reference key="1">
    <citation type="journal article" date="2004" name="Nature">
        <title>Genome evolution in yeasts.</title>
        <authorList>
            <person name="Dujon B."/>
            <person name="Sherman D."/>
            <person name="Fischer G."/>
            <person name="Durrens P."/>
            <person name="Casaregola S."/>
            <person name="Lafontaine I."/>
            <person name="de Montigny J."/>
            <person name="Marck C."/>
            <person name="Neuveglise C."/>
            <person name="Talla E."/>
            <person name="Goffard N."/>
            <person name="Frangeul L."/>
            <person name="Aigle M."/>
            <person name="Anthouard V."/>
            <person name="Babour A."/>
            <person name="Barbe V."/>
            <person name="Barnay S."/>
            <person name="Blanchin S."/>
            <person name="Beckerich J.-M."/>
            <person name="Beyne E."/>
            <person name="Bleykasten C."/>
            <person name="Boisrame A."/>
            <person name="Boyer J."/>
            <person name="Cattolico L."/>
            <person name="Confanioleri F."/>
            <person name="de Daruvar A."/>
            <person name="Despons L."/>
            <person name="Fabre E."/>
            <person name="Fairhead C."/>
            <person name="Ferry-Dumazet H."/>
            <person name="Groppi A."/>
            <person name="Hantraye F."/>
            <person name="Hennequin C."/>
            <person name="Jauniaux N."/>
            <person name="Joyet P."/>
            <person name="Kachouri R."/>
            <person name="Kerrest A."/>
            <person name="Koszul R."/>
            <person name="Lemaire M."/>
            <person name="Lesur I."/>
            <person name="Ma L."/>
            <person name="Muller H."/>
            <person name="Nicaud J.-M."/>
            <person name="Nikolski M."/>
            <person name="Oztas S."/>
            <person name="Ozier-Kalogeropoulos O."/>
            <person name="Pellenz S."/>
            <person name="Potier S."/>
            <person name="Richard G.-F."/>
            <person name="Straub M.-L."/>
            <person name="Suleau A."/>
            <person name="Swennen D."/>
            <person name="Tekaia F."/>
            <person name="Wesolowski-Louvel M."/>
            <person name="Westhof E."/>
            <person name="Wirth B."/>
            <person name="Zeniou-Meyer M."/>
            <person name="Zivanovic Y."/>
            <person name="Bolotin-Fukuhara M."/>
            <person name="Thierry A."/>
            <person name="Bouchier C."/>
            <person name="Caudron B."/>
            <person name="Scarpelli C."/>
            <person name="Gaillardin C."/>
            <person name="Weissenbach J."/>
            <person name="Wincker P."/>
            <person name="Souciet J.-L."/>
        </authorList>
    </citation>
    <scope>NUCLEOTIDE SEQUENCE [LARGE SCALE GENOMIC DNA]</scope>
    <source>
        <strain>ATCC 2001 / BCRC 20586 / JCM 3761 / NBRC 0622 / NRRL Y-65 / CBS 138</strain>
    </source>
</reference>
<sequence length="276" mass="30428">MVMLGQVVALAMASSAVALNCKNHNVLSNYNVANKDILLKNELDTPPSKTSEMWYLAPCEDGSRRQRPSECSSDDLMCAIRHVKVDGSDHLTQKLDVHKSAKYEVEEVESGGFDIRFLGVKWGSNTIDATLSYSCDTNLKTDELVTTIWNSEYVLIEMSGPSGCKRDGNSDSGDNGNGNGNGNDPDNNNNTGKDKKSKKTSWFTWLFVYAILFTVIYLMVVSYLNTKGGSFQDFRNEFVERGTEFITSLPTFVKEVVTKTLGTRDSSASRGGYSAV</sequence>
<dbReference type="EMBL" id="CR380959">
    <property type="protein sequence ID" value="CAG62814.1"/>
    <property type="molecule type" value="Genomic_DNA"/>
</dbReference>
<dbReference type="RefSeq" id="XP_449834.1">
    <property type="nucleotide sequence ID" value="XM_449834.1"/>
</dbReference>
<dbReference type="FunCoup" id="Q6FIW0">
    <property type="interactions" value="90"/>
</dbReference>
<dbReference type="STRING" id="284593.Q6FIW0"/>
<dbReference type="GlyCosmos" id="Q6FIW0">
    <property type="glycosylation" value="1 site, No reported glycans"/>
</dbReference>
<dbReference type="EnsemblFungi" id="CAGL0M11352g-T">
    <property type="protein sequence ID" value="CAGL0M11352g-T-p1"/>
    <property type="gene ID" value="CAGL0M11352g"/>
</dbReference>
<dbReference type="KEGG" id="cgr:2891403"/>
<dbReference type="CGD" id="CAL0136241">
    <property type="gene designation" value="CAGL0M11352g"/>
</dbReference>
<dbReference type="VEuPathDB" id="FungiDB:B1J91_M11352g"/>
<dbReference type="VEuPathDB" id="FungiDB:CAGL0M11352g"/>
<dbReference type="eggNOG" id="ENOG502QVJJ">
    <property type="taxonomic scope" value="Eukaryota"/>
</dbReference>
<dbReference type="HOGENOM" id="CLU_089705_0_0_1"/>
<dbReference type="InParanoid" id="Q6FIW0"/>
<dbReference type="OMA" id="NKGNAID"/>
<dbReference type="Proteomes" id="UP000002428">
    <property type="component" value="Chromosome M"/>
</dbReference>
<dbReference type="GO" id="GO:0030136">
    <property type="term" value="C:clathrin-coated vesicle"/>
    <property type="evidence" value="ECO:0007669"/>
    <property type="project" value="EnsemblFungi"/>
</dbReference>
<dbReference type="GO" id="GO:0030659">
    <property type="term" value="C:cytoplasmic vesicle membrane"/>
    <property type="evidence" value="ECO:0007669"/>
    <property type="project" value="UniProtKB-SubCell"/>
</dbReference>
<dbReference type="GO" id="GO:0000139">
    <property type="term" value="C:Golgi membrane"/>
    <property type="evidence" value="ECO:0007669"/>
    <property type="project" value="UniProtKB-SubCell"/>
</dbReference>
<dbReference type="GO" id="GO:0031966">
    <property type="term" value="C:mitochondrial membrane"/>
    <property type="evidence" value="ECO:0007669"/>
    <property type="project" value="UniProtKB-SubCell"/>
</dbReference>
<dbReference type="GO" id="GO:0034045">
    <property type="term" value="C:phagophore assembly site membrane"/>
    <property type="evidence" value="ECO:0007669"/>
    <property type="project" value="UniProtKB-SubCell"/>
</dbReference>
<dbReference type="GO" id="GO:0005802">
    <property type="term" value="C:trans-Golgi network"/>
    <property type="evidence" value="ECO:0007669"/>
    <property type="project" value="EnsemblFungi"/>
</dbReference>
<dbReference type="GO" id="GO:0005774">
    <property type="term" value="C:vacuolar membrane"/>
    <property type="evidence" value="ECO:0007669"/>
    <property type="project" value="EnsemblFungi"/>
</dbReference>
<dbReference type="GO" id="GO:0032266">
    <property type="term" value="F:phosphatidylinositol-3-phosphate binding"/>
    <property type="evidence" value="ECO:0007669"/>
    <property type="project" value="EnsemblFungi"/>
</dbReference>
<dbReference type="GO" id="GO:0032258">
    <property type="term" value="P:cytoplasm to vacuole targeting by the Cvt pathway"/>
    <property type="evidence" value="ECO:0007669"/>
    <property type="project" value="EnsemblFungi"/>
</dbReference>
<dbReference type="GO" id="GO:0000425">
    <property type="term" value="P:pexophagy"/>
    <property type="evidence" value="ECO:0007669"/>
    <property type="project" value="EnsemblFungi"/>
</dbReference>
<dbReference type="GO" id="GO:0034497">
    <property type="term" value="P:protein localization to phagophore assembly site"/>
    <property type="evidence" value="ECO:0007669"/>
    <property type="project" value="EnsemblFungi"/>
</dbReference>
<dbReference type="GO" id="GO:0016050">
    <property type="term" value="P:vesicle organization"/>
    <property type="evidence" value="ECO:0007669"/>
    <property type="project" value="EnsemblFungi"/>
</dbReference>
<dbReference type="InterPro" id="IPR018939">
    <property type="entry name" value="Autophagy-rel_prot_27"/>
</dbReference>
<dbReference type="InterPro" id="IPR044865">
    <property type="entry name" value="MRH_dom"/>
</dbReference>
<dbReference type="Pfam" id="PF09451">
    <property type="entry name" value="ATG27"/>
    <property type="match status" value="1"/>
</dbReference>
<dbReference type="PROSITE" id="PS51914">
    <property type="entry name" value="MRH"/>
    <property type="match status" value="1"/>
</dbReference>
<feature type="signal peptide" evidence="2">
    <location>
        <begin position="1"/>
        <end position="18"/>
    </location>
</feature>
<feature type="chain" id="PRO_0000001776" description="Autophagy-related protein 27">
    <location>
        <begin position="19"/>
        <end position="276"/>
    </location>
</feature>
<feature type="topological domain" description="Lumenal" evidence="2">
    <location>
        <begin position="19"/>
        <end position="200"/>
    </location>
</feature>
<feature type="transmembrane region" description="Helical" evidence="2">
    <location>
        <begin position="201"/>
        <end position="221"/>
    </location>
</feature>
<feature type="topological domain" description="Cytoplasmic" evidence="2">
    <location>
        <begin position="222"/>
        <end position="276"/>
    </location>
</feature>
<feature type="domain" description="MRH" evidence="3">
    <location>
        <begin position="19"/>
        <end position="166"/>
    </location>
</feature>
<feature type="region of interest" description="Disordered" evidence="4">
    <location>
        <begin position="162"/>
        <end position="196"/>
    </location>
</feature>
<feature type="compositionally biased region" description="Low complexity" evidence="4">
    <location>
        <begin position="182"/>
        <end position="191"/>
    </location>
</feature>
<feature type="glycosylation site" description="N-linked (GlcNAc...) asparagine" evidence="2">
    <location>
        <position position="189"/>
    </location>
</feature>
<feature type="disulfide bond" evidence="3">
    <location>
        <begin position="21"/>
        <end position="59"/>
    </location>
</feature>
<feature type="disulfide bond" evidence="3">
    <location>
        <begin position="71"/>
        <end position="78"/>
    </location>
</feature>
<feature type="disulfide bond" evidence="3">
    <location>
        <begin position="135"/>
        <end position="164"/>
    </location>
</feature>
<accession>Q6FIW0</accession>
<organism>
    <name type="scientific">Candida glabrata (strain ATCC 2001 / BCRC 20586 / JCM 3761 / NBRC 0622 / NRRL Y-65 / CBS 138)</name>
    <name type="common">Yeast</name>
    <name type="synonym">Nakaseomyces glabratus</name>
    <dbReference type="NCBI Taxonomy" id="284593"/>
    <lineage>
        <taxon>Eukaryota</taxon>
        <taxon>Fungi</taxon>
        <taxon>Dikarya</taxon>
        <taxon>Ascomycota</taxon>
        <taxon>Saccharomycotina</taxon>
        <taxon>Saccharomycetes</taxon>
        <taxon>Saccharomycetales</taxon>
        <taxon>Saccharomycetaceae</taxon>
        <taxon>Nakaseomyces</taxon>
    </lineage>
</organism>
<gene>
    <name type="primary">ATG27</name>
    <name type="ordered locus">CAGL0M11352g</name>
</gene>